<name>ATPB_SOLUE</name>
<proteinExistence type="inferred from homology"/>
<sequence>MVTTNVVTGKVVVVSGPAVDCEFPEGQIPPVHTAIRIISEGFDIPTPIDIICEVQQHIGEGRVRTIALQPTEGLVRGMQAISLGHPVEVPVGPETLGRVLNVIGEPVDEMGPVNAKKHYPIHRPAPSFEDQSTRLEMFETGIKVIDLIEPYLRGGKIGLFGGAGVGKTVIIQELINNLAMKHGGVSVFAGVGERTREGNDLWLEFQESGVIDPHDYTKSKCALIYGQMTEPPGARLRVGLTGLTVAEYFRDEEHQDVLLFIDNIFRFTQAGSEVSALLGRMPSAVGYQPNLATEMGELQERITSTKNGSITSVQAIYVPADDYTDPAPATAFAHLDATTNLSRDIAALGIYPAVDPLASTSRILDPHIVGEDHYATAQMVKGTLQRYKDLQDIIAILGIDELSDEDKLTVARARKVQKFLSQPFHVAEQFTGFKGKYVKLADSIKGFREIVEGKHDGVPEQAFYMQGTIEDVLEKAEAMKKA</sequence>
<feature type="chain" id="PRO_0000339590" description="ATP synthase subunit beta">
    <location>
        <begin position="1"/>
        <end position="482"/>
    </location>
</feature>
<feature type="binding site" evidence="1">
    <location>
        <begin position="161"/>
        <end position="168"/>
    </location>
    <ligand>
        <name>ATP</name>
        <dbReference type="ChEBI" id="CHEBI:30616"/>
    </ligand>
</feature>
<gene>
    <name evidence="1" type="primary">atpD</name>
    <name type="ordered locus">Acid_0465</name>
</gene>
<comment type="function">
    <text evidence="1">Produces ATP from ADP in the presence of a proton gradient across the membrane. The catalytic sites are hosted primarily by the beta subunits.</text>
</comment>
<comment type="catalytic activity">
    <reaction evidence="1">
        <text>ATP + H2O + 4 H(+)(in) = ADP + phosphate + 5 H(+)(out)</text>
        <dbReference type="Rhea" id="RHEA:57720"/>
        <dbReference type="ChEBI" id="CHEBI:15377"/>
        <dbReference type="ChEBI" id="CHEBI:15378"/>
        <dbReference type="ChEBI" id="CHEBI:30616"/>
        <dbReference type="ChEBI" id="CHEBI:43474"/>
        <dbReference type="ChEBI" id="CHEBI:456216"/>
        <dbReference type="EC" id="7.1.2.2"/>
    </reaction>
</comment>
<comment type="subunit">
    <text evidence="1">F-type ATPases have 2 components, CF(1) - the catalytic core - and CF(0) - the membrane proton channel. CF(1) has five subunits: alpha(3), beta(3), gamma(1), delta(1), epsilon(1). CF(0) has three main subunits: a(1), b(2) and c(9-12). The alpha and beta chains form an alternating ring which encloses part of the gamma chain. CF(1) is attached to CF(0) by a central stalk formed by the gamma and epsilon chains, while a peripheral stalk is formed by the delta and b chains.</text>
</comment>
<comment type="subcellular location">
    <subcellularLocation>
        <location evidence="1">Cell inner membrane</location>
        <topology evidence="1">Peripheral membrane protein</topology>
    </subcellularLocation>
</comment>
<comment type="similarity">
    <text evidence="1">Belongs to the ATPase alpha/beta chains family.</text>
</comment>
<protein>
    <recommendedName>
        <fullName evidence="1">ATP synthase subunit beta</fullName>
        <ecNumber evidence="1">7.1.2.2</ecNumber>
    </recommendedName>
    <alternativeName>
        <fullName evidence="1">ATP synthase F1 sector subunit beta</fullName>
    </alternativeName>
    <alternativeName>
        <fullName evidence="1">F-ATPase subunit beta</fullName>
    </alternativeName>
</protein>
<accession>Q02BU1</accession>
<keyword id="KW-0066">ATP synthesis</keyword>
<keyword id="KW-0067">ATP-binding</keyword>
<keyword id="KW-0997">Cell inner membrane</keyword>
<keyword id="KW-1003">Cell membrane</keyword>
<keyword id="KW-0139">CF(1)</keyword>
<keyword id="KW-0375">Hydrogen ion transport</keyword>
<keyword id="KW-0406">Ion transport</keyword>
<keyword id="KW-0472">Membrane</keyword>
<keyword id="KW-0547">Nucleotide-binding</keyword>
<keyword id="KW-1278">Translocase</keyword>
<keyword id="KW-0813">Transport</keyword>
<organism>
    <name type="scientific">Solibacter usitatus (strain Ellin6076)</name>
    <dbReference type="NCBI Taxonomy" id="234267"/>
    <lineage>
        <taxon>Bacteria</taxon>
        <taxon>Pseudomonadati</taxon>
        <taxon>Acidobacteriota</taxon>
        <taxon>Terriglobia</taxon>
        <taxon>Bryobacterales</taxon>
        <taxon>Solibacteraceae</taxon>
        <taxon>Candidatus Solibacter</taxon>
    </lineage>
</organism>
<reference key="1">
    <citation type="journal article" date="2009" name="Appl. Environ. Microbiol.">
        <title>Three genomes from the phylum Acidobacteria provide insight into the lifestyles of these microorganisms in soils.</title>
        <authorList>
            <person name="Ward N.L."/>
            <person name="Challacombe J.F."/>
            <person name="Janssen P.H."/>
            <person name="Henrissat B."/>
            <person name="Coutinho P.M."/>
            <person name="Wu M."/>
            <person name="Xie G."/>
            <person name="Haft D.H."/>
            <person name="Sait M."/>
            <person name="Badger J."/>
            <person name="Barabote R.D."/>
            <person name="Bradley B."/>
            <person name="Brettin T.S."/>
            <person name="Brinkac L.M."/>
            <person name="Bruce D."/>
            <person name="Creasy T."/>
            <person name="Daugherty S.C."/>
            <person name="Davidsen T.M."/>
            <person name="DeBoy R.T."/>
            <person name="Detter J.C."/>
            <person name="Dodson R.J."/>
            <person name="Durkin A.S."/>
            <person name="Ganapathy A."/>
            <person name="Gwinn-Giglio M."/>
            <person name="Han C.S."/>
            <person name="Khouri H."/>
            <person name="Kiss H."/>
            <person name="Kothari S.P."/>
            <person name="Madupu R."/>
            <person name="Nelson K.E."/>
            <person name="Nelson W.C."/>
            <person name="Paulsen I."/>
            <person name="Penn K."/>
            <person name="Ren Q."/>
            <person name="Rosovitz M.J."/>
            <person name="Selengut J.D."/>
            <person name="Shrivastava S."/>
            <person name="Sullivan S.A."/>
            <person name="Tapia R."/>
            <person name="Thompson L.S."/>
            <person name="Watkins K.L."/>
            <person name="Yang Q."/>
            <person name="Yu C."/>
            <person name="Zafar N."/>
            <person name="Zhou L."/>
            <person name="Kuske C.R."/>
        </authorList>
    </citation>
    <scope>NUCLEOTIDE SEQUENCE [LARGE SCALE GENOMIC DNA]</scope>
    <source>
        <strain>Ellin6076</strain>
    </source>
</reference>
<dbReference type="EC" id="7.1.2.2" evidence="1"/>
<dbReference type="EMBL" id="CP000473">
    <property type="protein sequence ID" value="ABJ81475.1"/>
    <property type="molecule type" value="Genomic_DNA"/>
</dbReference>
<dbReference type="SMR" id="Q02BU1"/>
<dbReference type="FunCoup" id="Q02BU1">
    <property type="interactions" value="509"/>
</dbReference>
<dbReference type="STRING" id="234267.Acid_0465"/>
<dbReference type="KEGG" id="sus:Acid_0465"/>
<dbReference type="eggNOG" id="COG0055">
    <property type="taxonomic scope" value="Bacteria"/>
</dbReference>
<dbReference type="HOGENOM" id="CLU_022398_0_2_0"/>
<dbReference type="InParanoid" id="Q02BU1"/>
<dbReference type="OrthoDB" id="9801639at2"/>
<dbReference type="GO" id="GO:0005886">
    <property type="term" value="C:plasma membrane"/>
    <property type="evidence" value="ECO:0007669"/>
    <property type="project" value="UniProtKB-SubCell"/>
</dbReference>
<dbReference type="GO" id="GO:0045259">
    <property type="term" value="C:proton-transporting ATP synthase complex"/>
    <property type="evidence" value="ECO:0007669"/>
    <property type="project" value="UniProtKB-KW"/>
</dbReference>
<dbReference type="GO" id="GO:0005524">
    <property type="term" value="F:ATP binding"/>
    <property type="evidence" value="ECO:0007669"/>
    <property type="project" value="UniProtKB-UniRule"/>
</dbReference>
<dbReference type="GO" id="GO:0016887">
    <property type="term" value="F:ATP hydrolysis activity"/>
    <property type="evidence" value="ECO:0007669"/>
    <property type="project" value="InterPro"/>
</dbReference>
<dbReference type="GO" id="GO:0046933">
    <property type="term" value="F:proton-transporting ATP synthase activity, rotational mechanism"/>
    <property type="evidence" value="ECO:0007669"/>
    <property type="project" value="UniProtKB-UniRule"/>
</dbReference>
<dbReference type="CDD" id="cd18110">
    <property type="entry name" value="ATP-synt_F1_beta_C"/>
    <property type="match status" value="1"/>
</dbReference>
<dbReference type="CDD" id="cd18115">
    <property type="entry name" value="ATP-synt_F1_beta_N"/>
    <property type="match status" value="1"/>
</dbReference>
<dbReference type="CDD" id="cd01133">
    <property type="entry name" value="F1-ATPase_beta_CD"/>
    <property type="match status" value="1"/>
</dbReference>
<dbReference type="FunFam" id="1.10.1140.10:FF:000001">
    <property type="entry name" value="ATP synthase subunit beta"/>
    <property type="match status" value="1"/>
</dbReference>
<dbReference type="FunFam" id="3.40.50.300:FF:000026">
    <property type="entry name" value="ATP synthase subunit beta"/>
    <property type="match status" value="1"/>
</dbReference>
<dbReference type="Gene3D" id="2.40.10.170">
    <property type="match status" value="1"/>
</dbReference>
<dbReference type="Gene3D" id="1.10.1140.10">
    <property type="entry name" value="Bovine Mitochondrial F1-atpase, Atp Synthase Beta Chain, Chain D, domain 3"/>
    <property type="match status" value="1"/>
</dbReference>
<dbReference type="Gene3D" id="3.40.50.300">
    <property type="entry name" value="P-loop containing nucleotide triphosphate hydrolases"/>
    <property type="match status" value="1"/>
</dbReference>
<dbReference type="HAMAP" id="MF_01347">
    <property type="entry name" value="ATP_synth_beta_bact"/>
    <property type="match status" value="1"/>
</dbReference>
<dbReference type="InterPro" id="IPR003593">
    <property type="entry name" value="AAA+_ATPase"/>
</dbReference>
<dbReference type="InterPro" id="IPR055190">
    <property type="entry name" value="ATP-synt_VA_C"/>
</dbReference>
<dbReference type="InterPro" id="IPR005722">
    <property type="entry name" value="ATP_synth_F1_bsu"/>
</dbReference>
<dbReference type="InterPro" id="IPR020003">
    <property type="entry name" value="ATPase_a/bsu_AS"/>
</dbReference>
<dbReference type="InterPro" id="IPR050053">
    <property type="entry name" value="ATPase_alpha/beta_chains"/>
</dbReference>
<dbReference type="InterPro" id="IPR004100">
    <property type="entry name" value="ATPase_F1/V1/A1_a/bsu_N"/>
</dbReference>
<dbReference type="InterPro" id="IPR036121">
    <property type="entry name" value="ATPase_F1/V1/A1_a/bsu_N_sf"/>
</dbReference>
<dbReference type="InterPro" id="IPR000194">
    <property type="entry name" value="ATPase_F1/V1/A1_a/bsu_nucl-bd"/>
</dbReference>
<dbReference type="InterPro" id="IPR024034">
    <property type="entry name" value="ATPase_F1/V1_b/a_C"/>
</dbReference>
<dbReference type="InterPro" id="IPR027417">
    <property type="entry name" value="P-loop_NTPase"/>
</dbReference>
<dbReference type="NCBIfam" id="TIGR01039">
    <property type="entry name" value="atpD"/>
    <property type="match status" value="1"/>
</dbReference>
<dbReference type="PANTHER" id="PTHR15184">
    <property type="entry name" value="ATP SYNTHASE"/>
    <property type="match status" value="1"/>
</dbReference>
<dbReference type="PANTHER" id="PTHR15184:SF71">
    <property type="entry name" value="ATP SYNTHASE SUBUNIT BETA, MITOCHONDRIAL"/>
    <property type="match status" value="1"/>
</dbReference>
<dbReference type="Pfam" id="PF00006">
    <property type="entry name" value="ATP-synt_ab"/>
    <property type="match status" value="1"/>
</dbReference>
<dbReference type="Pfam" id="PF02874">
    <property type="entry name" value="ATP-synt_ab_N"/>
    <property type="match status" value="1"/>
</dbReference>
<dbReference type="Pfam" id="PF22919">
    <property type="entry name" value="ATP-synt_VA_C"/>
    <property type="match status" value="1"/>
</dbReference>
<dbReference type="SMART" id="SM00382">
    <property type="entry name" value="AAA"/>
    <property type="match status" value="1"/>
</dbReference>
<dbReference type="SUPFAM" id="SSF47917">
    <property type="entry name" value="C-terminal domain of alpha and beta subunits of F1 ATP synthase"/>
    <property type="match status" value="1"/>
</dbReference>
<dbReference type="SUPFAM" id="SSF50615">
    <property type="entry name" value="N-terminal domain of alpha and beta subunits of F1 ATP synthase"/>
    <property type="match status" value="1"/>
</dbReference>
<dbReference type="SUPFAM" id="SSF52540">
    <property type="entry name" value="P-loop containing nucleoside triphosphate hydrolases"/>
    <property type="match status" value="1"/>
</dbReference>
<dbReference type="PROSITE" id="PS00152">
    <property type="entry name" value="ATPASE_ALPHA_BETA"/>
    <property type="match status" value="1"/>
</dbReference>
<evidence type="ECO:0000255" key="1">
    <source>
        <dbReference type="HAMAP-Rule" id="MF_01347"/>
    </source>
</evidence>